<protein>
    <recommendedName>
        <fullName>Uncharacterized monooxygenase y4iD</fullName>
        <ecNumber>1.14.13.-</ecNumber>
    </recommendedName>
</protein>
<evidence type="ECO:0000250" key="1"/>
<evidence type="ECO:0000255" key="2"/>
<evidence type="ECO:0000256" key="3">
    <source>
        <dbReference type="SAM" id="MobiDB-lite"/>
    </source>
</evidence>
<evidence type="ECO:0000305" key="4"/>
<organism>
    <name type="scientific">Sinorhizobium fredii (strain NBRC 101917 / NGR234)</name>
    <dbReference type="NCBI Taxonomy" id="394"/>
    <lineage>
        <taxon>Bacteria</taxon>
        <taxon>Pseudomonadati</taxon>
        <taxon>Pseudomonadota</taxon>
        <taxon>Alphaproteobacteria</taxon>
        <taxon>Hyphomicrobiales</taxon>
        <taxon>Rhizobiaceae</taxon>
        <taxon>Sinorhizobium/Ensifer group</taxon>
        <taxon>Sinorhizobium</taxon>
    </lineage>
</organism>
<proteinExistence type="inferred from homology"/>
<name>Y4ID_SINFN</name>
<geneLocation type="plasmid">
    <name>sym pNGR234a</name>
</geneLocation>
<accession>P55487</accession>
<reference key="1">
    <citation type="journal article" date="1997" name="Nature">
        <title>Molecular basis of symbiosis between Rhizobium and legumes.</title>
        <authorList>
            <person name="Freiberg C.A."/>
            <person name="Fellay R."/>
            <person name="Bairoch A."/>
            <person name="Broughton W.J."/>
            <person name="Rosenthal A."/>
            <person name="Perret X."/>
        </authorList>
    </citation>
    <scope>NUCLEOTIDE SEQUENCE [LARGE SCALE GENOMIC DNA]</scope>
    <source>
        <strain>NBRC 101917 / NGR234</strain>
    </source>
</reference>
<reference key="2">
    <citation type="journal article" date="2009" name="Appl. Environ. Microbiol.">
        <title>Rhizobium sp. strain NGR234 possesses a remarkable number of secretion systems.</title>
        <authorList>
            <person name="Schmeisser C."/>
            <person name="Liesegang H."/>
            <person name="Krysciak D."/>
            <person name="Bakkou N."/>
            <person name="Le Quere A."/>
            <person name="Wollherr A."/>
            <person name="Heinemeyer I."/>
            <person name="Morgenstern B."/>
            <person name="Pommerening-Roeser A."/>
            <person name="Flores M."/>
            <person name="Palacios R."/>
            <person name="Brenner S."/>
            <person name="Gottschalk G."/>
            <person name="Schmitz R.A."/>
            <person name="Broughton W.J."/>
            <person name="Perret X."/>
            <person name="Strittmatter A.W."/>
            <person name="Streit W.R."/>
        </authorList>
    </citation>
    <scope>NUCLEOTIDE SEQUENCE [LARGE SCALE GENOMIC DNA]</scope>
    <source>
        <strain>NBRC 101917 / NGR234</strain>
    </source>
</reference>
<keyword id="KW-0274">FAD</keyword>
<keyword id="KW-0285">Flavoprotein</keyword>
<keyword id="KW-0503">Monooxygenase</keyword>
<keyword id="KW-0521">NADP</keyword>
<keyword id="KW-0560">Oxidoreductase</keyword>
<keyword id="KW-0614">Plasmid</keyword>
<keyword id="KW-1185">Reference proteome</keyword>
<comment type="cofactor">
    <cofactor evidence="1">
        <name>FAD</name>
        <dbReference type="ChEBI" id="CHEBI:57692"/>
    </cofactor>
</comment>
<comment type="similarity">
    <text evidence="4">Belongs to the FAD-binding monooxygenase family.</text>
</comment>
<dbReference type="EC" id="1.14.13.-"/>
<dbReference type="EMBL" id="U00090">
    <property type="protein sequence ID" value="AAB91699.1"/>
    <property type="molecule type" value="Genomic_DNA"/>
</dbReference>
<dbReference type="RefSeq" id="NP_443897.1">
    <property type="nucleotide sequence ID" value="NC_000914.2"/>
</dbReference>
<dbReference type="RefSeq" id="WP_010875343.1">
    <property type="nucleotide sequence ID" value="NC_000914.2"/>
</dbReference>
<dbReference type="SMR" id="P55487"/>
<dbReference type="KEGG" id="rhi:NGR_a03290"/>
<dbReference type="PATRIC" id="fig|394.7.peg.338"/>
<dbReference type="eggNOG" id="COG2072">
    <property type="taxonomic scope" value="Bacteria"/>
</dbReference>
<dbReference type="HOGENOM" id="CLU_006937_7_1_5"/>
<dbReference type="OrthoDB" id="312624at2"/>
<dbReference type="Proteomes" id="UP000001054">
    <property type="component" value="Plasmid pNGR234a"/>
</dbReference>
<dbReference type="GO" id="GO:0004497">
    <property type="term" value="F:monooxygenase activity"/>
    <property type="evidence" value="ECO:0007669"/>
    <property type="project" value="UniProtKB-KW"/>
</dbReference>
<dbReference type="Gene3D" id="3.50.50.60">
    <property type="entry name" value="FAD/NAD(P)-binding domain"/>
    <property type="match status" value="2"/>
</dbReference>
<dbReference type="InterPro" id="IPR051209">
    <property type="entry name" value="FAD-bind_Monooxygenase_sf"/>
</dbReference>
<dbReference type="InterPro" id="IPR036188">
    <property type="entry name" value="FAD/NAD-bd_sf"/>
</dbReference>
<dbReference type="PANTHER" id="PTHR42877:SF4">
    <property type="entry name" value="FAD_NAD(P)-BINDING DOMAIN-CONTAINING PROTEIN-RELATED"/>
    <property type="match status" value="1"/>
</dbReference>
<dbReference type="PANTHER" id="PTHR42877">
    <property type="entry name" value="L-ORNITHINE N(5)-MONOOXYGENASE-RELATED"/>
    <property type="match status" value="1"/>
</dbReference>
<dbReference type="Pfam" id="PF13450">
    <property type="entry name" value="NAD_binding_8"/>
    <property type="match status" value="1"/>
</dbReference>
<dbReference type="PRINTS" id="PR00368">
    <property type="entry name" value="FADPNR"/>
</dbReference>
<dbReference type="PRINTS" id="PR00411">
    <property type="entry name" value="PNDRDTASEI"/>
</dbReference>
<dbReference type="SUPFAM" id="SSF51905">
    <property type="entry name" value="FAD/NAD(P)-binding domain"/>
    <property type="match status" value="1"/>
</dbReference>
<gene>
    <name type="ordered locus">NGR_a03290</name>
    <name type="ORF">y4iD</name>
</gene>
<sequence>MAHSSDLALFRHRIAEALPSANVPTLLLLLYQFTGKEYWLTPPFLPVKSVWGDNDSGGLAAELQTEIRNAALDAIICWHSGAPVTKQDLSEEELIRMLTVSEAEPIPPEYADMMLHKLRRYAGAIPDPVSLPKGFRVLIIGAGMSGVAAAIRLRQLGISYIQVEKQDSTGGVWHAHHYPGCGVDTPGHLYSYTFASGNWSTFFPLQKEIDDYFNRVARDFGIESSIRYGTECLVTRYDEESLTWHSRLRLPNGTEETLVTNVVLSAVGGFTTPKWPNLSGLRNFDGPVVHTSKWDPEVALDGKRVAVIGNGASAMQVVPAIADRVGALTIFQRSRQWVAPFPKFQKPVPEPMQFLFREVPHYEWLYRLRLSWIYDSEVHEALQKDPAWPHPDRSVNAVNDRDREAYTQYIEGQLAGRPDLIAKVIPSYPPFGKRMLLDNGWYRTLLKPHVTLVDGAAARVEGRSIHAIDDETHEADLIIVASGYDTTRYLLPVEVIGRNGRTVRDVWDDDDCQAYLGTVVAGFPNFFMLYGPNTALGHRGSFIFTIESQIDYVLSVLRQMGEKRLVEVECRQDIYQHYNRKIQQMHQQMIWSHEGMSTFFRNDRGRIVTNSPWRLVDYWNLLKEADLDDYRTMPQVDSRLETSGVPREGVQRPGSRLRRRPS</sequence>
<feature type="chain" id="PRO_0000186457" description="Uncharacterized monooxygenase y4iD">
    <location>
        <begin position="1"/>
        <end position="662"/>
    </location>
</feature>
<feature type="region of interest" description="Disordered" evidence="3">
    <location>
        <begin position="638"/>
        <end position="662"/>
    </location>
</feature>
<feature type="binding site" evidence="1">
    <location>
        <position position="145"/>
    </location>
    <ligand>
        <name>FAD</name>
        <dbReference type="ChEBI" id="CHEBI:57692"/>
    </ligand>
</feature>
<feature type="binding site" evidence="1">
    <location>
        <position position="164"/>
    </location>
    <ligand>
        <name>FAD</name>
        <dbReference type="ChEBI" id="CHEBI:57692"/>
    </ligand>
</feature>
<feature type="binding site" evidence="1">
    <location>
        <position position="173"/>
    </location>
    <ligand>
        <name>FAD</name>
        <dbReference type="ChEBI" id="CHEBI:57692"/>
    </ligand>
</feature>
<feature type="binding site" evidence="1">
    <location>
        <position position="184"/>
    </location>
    <ligand>
        <name>FAD</name>
        <dbReference type="ChEBI" id="CHEBI:57692"/>
    </ligand>
</feature>
<feature type="binding site" evidence="1">
    <location>
        <position position="190"/>
    </location>
    <ligand>
        <name>FAD</name>
        <dbReference type="ChEBI" id="CHEBI:57692"/>
    </ligand>
</feature>
<feature type="site" description="Transition state stabilizer" evidence="2">
    <location>
        <position position="434"/>
    </location>
</feature>